<feature type="chain" id="PRO_1000066355" description="Carbamoyl phosphate synthase large chain">
    <location>
        <begin position="1"/>
        <end position="1062"/>
    </location>
</feature>
<feature type="domain" description="ATP-grasp 1" evidence="1">
    <location>
        <begin position="133"/>
        <end position="327"/>
    </location>
</feature>
<feature type="domain" description="ATP-grasp 2" evidence="1">
    <location>
        <begin position="671"/>
        <end position="861"/>
    </location>
</feature>
<feature type="domain" description="MGS-like" evidence="1">
    <location>
        <begin position="930"/>
        <end position="1062"/>
    </location>
</feature>
<feature type="region of interest" description="Carboxyphosphate synthetic domain" evidence="1">
    <location>
        <begin position="1"/>
        <end position="401"/>
    </location>
</feature>
<feature type="region of interest" description="Oligomerization domain" evidence="1">
    <location>
        <begin position="402"/>
        <end position="546"/>
    </location>
</feature>
<feature type="region of interest" description="Carbamoyl phosphate synthetic domain" evidence="1">
    <location>
        <begin position="547"/>
        <end position="929"/>
    </location>
</feature>
<feature type="region of interest" description="Allosteric domain" evidence="1">
    <location>
        <begin position="930"/>
        <end position="1062"/>
    </location>
</feature>
<feature type="binding site" evidence="1">
    <location>
        <position position="129"/>
    </location>
    <ligand>
        <name>ATP</name>
        <dbReference type="ChEBI" id="CHEBI:30616"/>
        <label>1</label>
    </ligand>
</feature>
<feature type="binding site" evidence="1">
    <location>
        <position position="169"/>
    </location>
    <ligand>
        <name>ATP</name>
        <dbReference type="ChEBI" id="CHEBI:30616"/>
        <label>1</label>
    </ligand>
</feature>
<feature type="binding site" evidence="1">
    <location>
        <position position="175"/>
    </location>
    <ligand>
        <name>ATP</name>
        <dbReference type="ChEBI" id="CHEBI:30616"/>
        <label>1</label>
    </ligand>
</feature>
<feature type="binding site" evidence="1">
    <location>
        <position position="176"/>
    </location>
    <ligand>
        <name>ATP</name>
        <dbReference type="ChEBI" id="CHEBI:30616"/>
        <label>1</label>
    </ligand>
</feature>
<feature type="binding site" evidence="1">
    <location>
        <position position="208"/>
    </location>
    <ligand>
        <name>ATP</name>
        <dbReference type="ChEBI" id="CHEBI:30616"/>
        <label>1</label>
    </ligand>
</feature>
<feature type="binding site" evidence="1">
    <location>
        <position position="210"/>
    </location>
    <ligand>
        <name>ATP</name>
        <dbReference type="ChEBI" id="CHEBI:30616"/>
        <label>1</label>
    </ligand>
</feature>
<feature type="binding site" evidence="1">
    <location>
        <position position="215"/>
    </location>
    <ligand>
        <name>ATP</name>
        <dbReference type="ChEBI" id="CHEBI:30616"/>
        <label>1</label>
    </ligand>
</feature>
<feature type="binding site" evidence="1">
    <location>
        <position position="241"/>
    </location>
    <ligand>
        <name>ATP</name>
        <dbReference type="ChEBI" id="CHEBI:30616"/>
        <label>1</label>
    </ligand>
</feature>
<feature type="binding site" evidence="1">
    <location>
        <position position="242"/>
    </location>
    <ligand>
        <name>ATP</name>
        <dbReference type="ChEBI" id="CHEBI:30616"/>
        <label>1</label>
    </ligand>
</feature>
<feature type="binding site" evidence="1">
    <location>
        <position position="243"/>
    </location>
    <ligand>
        <name>ATP</name>
        <dbReference type="ChEBI" id="CHEBI:30616"/>
        <label>1</label>
    </ligand>
</feature>
<feature type="binding site" evidence="1">
    <location>
        <position position="284"/>
    </location>
    <ligand>
        <name>ATP</name>
        <dbReference type="ChEBI" id="CHEBI:30616"/>
        <label>1</label>
    </ligand>
</feature>
<feature type="binding site" evidence="1">
    <location>
        <position position="284"/>
    </location>
    <ligand>
        <name>Mg(2+)</name>
        <dbReference type="ChEBI" id="CHEBI:18420"/>
        <label>1</label>
    </ligand>
</feature>
<feature type="binding site" evidence="1">
    <location>
        <position position="284"/>
    </location>
    <ligand>
        <name>Mn(2+)</name>
        <dbReference type="ChEBI" id="CHEBI:29035"/>
        <label>1</label>
    </ligand>
</feature>
<feature type="binding site" evidence="1">
    <location>
        <position position="298"/>
    </location>
    <ligand>
        <name>ATP</name>
        <dbReference type="ChEBI" id="CHEBI:30616"/>
        <label>1</label>
    </ligand>
</feature>
<feature type="binding site" evidence="1">
    <location>
        <position position="298"/>
    </location>
    <ligand>
        <name>Mg(2+)</name>
        <dbReference type="ChEBI" id="CHEBI:18420"/>
        <label>1</label>
    </ligand>
</feature>
<feature type="binding site" evidence="1">
    <location>
        <position position="298"/>
    </location>
    <ligand>
        <name>Mg(2+)</name>
        <dbReference type="ChEBI" id="CHEBI:18420"/>
        <label>2</label>
    </ligand>
</feature>
<feature type="binding site" evidence="1">
    <location>
        <position position="298"/>
    </location>
    <ligand>
        <name>Mn(2+)</name>
        <dbReference type="ChEBI" id="CHEBI:29035"/>
        <label>1</label>
    </ligand>
</feature>
<feature type="binding site" evidence="1">
    <location>
        <position position="298"/>
    </location>
    <ligand>
        <name>Mn(2+)</name>
        <dbReference type="ChEBI" id="CHEBI:29035"/>
        <label>2</label>
    </ligand>
</feature>
<feature type="binding site" evidence="1">
    <location>
        <position position="300"/>
    </location>
    <ligand>
        <name>Mg(2+)</name>
        <dbReference type="ChEBI" id="CHEBI:18420"/>
        <label>2</label>
    </ligand>
</feature>
<feature type="binding site" evidence="1">
    <location>
        <position position="300"/>
    </location>
    <ligand>
        <name>Mn(2+)</name>
        <dbReference type="ChEBI" id="CHEBI:29035"/>
        <label>2</label>
    </ligand>
</feature>
<feature type="binding site" evidence="1">
    <location>
        <position position="707"/>
    </location>
    <ligand>
        <name>ATP</name>
        <dbReference type="ChEBI" id="CHEBI:30616"/>
        <label>2</label>
    </ligand>
</feature>
<feature type="binding site" evidence="1">
    <location>
        <position position="746"/>
    </location>
    <ligand>
        <name>ATP</name>
        <dbReference type="ChEBI" id="CHEBI:30616"/>
        <label>2</label>
    </ligand>
</feature>
<feature type="binding site" evidence="1">
    <location>
        <position position="748"/>
    </location>
    <ligand>
        <name>ATP</name>
        <dbReference type="ChEBI" id="CHEBI:30616"/>
        <label>2</label>
    </ligand>
</feature>
<feature type="binding site" evidence="1">
    <location>
        <position position="752"/>
    </location>
    <ligand>
        <name>ATP</name>
        <dbReference type="ChEBI" id="CHEBI:30616"/>
        <label>2</label>
    </ligand>
</feature>
<feature type="binding site" evidence="1">
    <location>
        <position position="777"/>
    </location>
    <ligand>
        <name>ATP</name>
        <dbReference type="ChEBI" id="CHEBI:30616"/>
        <label>2</label>
    </ligand>
</feature>
<feature type="binding site" evidence="1">
    <location>
        <position position="778"/>
    </location>
    <ligand>
        <name>ATP</name>
        <dbReference type="ChEBI" id="CHEBI:30616"/>
        <label>2</label>
    </ligand>
</feature>
<feature type="binding site" evidence="1">
    <location>
        <position position="779"/>
    </location>
    <ligand>
        <name>ATP</name>
        <dbReference type="ChEBI" id="CHEBI:30616"/>
        <label>2</label>
    </ligand>
</feature>
<feature type="binding site" evidence="1">
    <location>
        <position position="780"/>
    </location>
    <ligand>
        <name>ATP</name>
        <dbReference type="ChEBI" id="CHEBI:30616"/>
        <label>2</label>
    </ligand>
</feature>
<feature type="binding site" evidence="1">
    <location>
        <position position="820"/>
    </location>
    <ligand>
        <name>ATP</name>
        <dbReference type="ChEBI" id="CHEBI:30616"/>
        <label>2</label>
    </ligand>
</feature>
<feature type="binding site" evidence="1">
    <location>
        <position position="820"/>
    </location>
    <ligand>
        <name>Mg(2+)</name>
        <dbReference type="ChEBI" id="CHEBI:18420"/>
        <label>3</label>
    </ligand>
</feature>
<feature type="binding site" evidence="1">
    <location>
        <position position="820"/>
    </location>
    <ligand>
        <name>Mn(2+)</name>
        <dbReference type="ChEBI" id="CHEBI:29035"/>
        <label>3</label>
    </ligand>
</feature>
<feature type="binding site" evidence="1">
    <location>
        <position position="832"/>
    </location>
    <ligand>
        <name>ATP</name>
        <dbReference type="ChEBI" id="CHEBI:30616"/>
        <label>2</label>
    </ligand>
</feature>
<feature type="binding site" evidence="1">
    <location>
        <position position="832"/>
    </location>
    <ligand>
        <name>Mg(2+)</name>
        <dbReference type="ChEBI" id="CHEBI:18420"/>
        <label>3</label>
    </ligand>
</feature>
<feature type="binding site" evidence="1">
    <location>
        <position position="832"/>
    </location>
    <ligand>
        <name>Mg(2+)</name>
        <dbReference type="ChEBI" id="CHEBI:18420"/>
        <label>4</label>
    </ligand>
</feature>
<feature type="binding site" evidence="1">
    <location>
        <position position="832"/>
    </location>
    <ligand>
        <name>Mn(2+)</name>
        <dbReference type="ChEBI" id="CHEBI:29035"/>
        <label>3</label>
    </ligand>
</feature>
<feature type="binding site" evidence="1">
    <location>
        <position position="832"/>
    </location>
    <ligand>
        <name>Mn(2+)</name>
        <dbReference type="ChEBI" id="CHEBI:29035"/>
        <label>4</label>
    </ligand>
</feature>
<feature type="binding site" evidence="1">
    <location>
        <position position="834"/>
    </location>
    <ligand>
        <name>Mg(2+)</name>
        <dbReference type="ChEBI" id="CHEBI:18420"/>
        <label>4</label>
    </ligand>
</feature>
<feature type="binding site" evidence="1">
    <location>
        <position position="834"/>
    </location>
    <ligand>
        <name>Mn(2+)</name>
        <dbReference type="ChEBI" id="CHEBI:29035"/>
        <label>4</label>
    </ligand>
</feature>
<protein>
    <recommendedName>
        <fullName evidence="1">Carbamoyl phosphate synthase large chain</fullName>
        <ecNumber evidence="1">6.3.4.16</ecNumber>
        <ecNumber evidence="1">6.3.5.5</ecNumber>
    </recommendedName>
    <alternativeName>
        <fullName evidence="1">Carbamoyl phosphate synthetase ammonia chain</fullName>
    </alternativeName>
</protein>
<sequence>MPKRTDIHKIMVIGSGPIIIGQAAEFDYSGTQACLALREEGYEVVLVNSNPATIMTDTTIADKVYIEPLTVESISRIIRQEYPDAILPTLGGQVGLNMALSLAKTGILDELNIELLGTRLSSIEQAEDREKFKELCKELGEPVPPSTTVNTVEEALEFGDRIGYPIIVRPAFTMGGTGGGICNNHEELAKIAKNGLELSPVTECLIEKSIAGYKEIEFEVMRDHDDNAMIVCCMENFDPVGIHTGDSIVFSPSQTLSDKEYQMLRDCSLRLIRALKIEGGCNVQLALDPNSFDYDVIEVNPRVSRSSALASKATGYPIAKMAAKIAIGMTLDEIKNPVTRTTYAEFEPALDYVVCKIPRWPFDKFSKADRTLSTQMKATGEVMAIGRTAEEAMQKAVRSLEIDEKDLYSETAHHASDEEIEQKLVKAQDDRLFYLAEAFRRGYSLEDVHELTKINFYFLDIVSHMVEMEKNIQENKDNLETLRLAKKYGFSDATIATLWNESIDQVRDLRKKNGIIPVYKMVDTCAAEFESKTPYFYSTYDGENESHKSGKKSVIVIGSGPIRIGQGVEFDYATVHCVKALQKMGYEAIVINSNPETVSTDFSISDKLYFEPLTLEDVLNVCDLEKPEGVIVQFGGQTSINLAAGLKDHGIKILGTSVKDLNRAEDRELFDQIIKKLKLNQPKGLTATTHEGVIKAAEELGYPVLVRPSYVLGGKAMEIVYNKSELEEYLHDHVDIAADHPILVDDYLDGRECDVDAICDGQDVLLPGIMEHIEHAGVHSGDSMAVYPPQNFTDEVKDKIMDVTRKLALTLNCVGIMNIQFIVRNGEVYVIEVNPRASRTVPFLSKITGIEMAQVATRVIMGESLAQQGYSDGLAPEPEMISVKAPVFSFSKLADVDSYLGPEMKSTGEVMGSDHTFAKALYKAFAGAKMQLPENGNVLLTIEDKDKEKILPIAKRFARIGYRIFATKGTADFLKNNGLHVDLVTKVHESENADDNILNELREGRIDLVINTMGHDIEKNSDGFIIRQMAIQQNVPLLTALDTADALLTSLENRSFATDALK</sequence>
<evidence type="ECO:0000255" key="1">
    <source>
        <dbReference type="HAMAP-Rule" id="MF_01210"/>
    </source>
</evidence>
<gene>
    <name evidence="1" type="primary">carB</name>
    <name type="ordered locus">LJ_1276</name>
</gene>
<accession>Q74J34</accession>
<reference key="1">
    <citation type="journal article" date="2004" name="Proc. Natl. Acad. Sci. U.S.A.">
        <title>The genome sequence of the probiotic intestinal bacterium Lactobacillus johnsonii NCC 533.</title>
        <authorList>
            <person name="Pridmore R.D."/>
            <person name="Berger B."/>
            <person name="Desiere F."/>
            <person name="Vilanova D."/>
            <person name="Barretto C."/>
            <person name="Pittet A.-C."/>
            <person name="Zwahlen M.-C."/>
            <person name="Rouvet M."/>
            <person name="Altermann E."/>
            <person name="Barrangou R."/>
            <person name="Mollet B."/>
            <person name="Mercenier A."/>
            <person name="Klaenhammer T."/>
            <person name="Arigoni F."/>
            <person name="Schell M.A."/>
        </authorList>
    </citation>
    <scope>NUCLEOTIDE SEQUENCE [LARGE SCALE GENOMIC DNA]</scope>
    <source>
        <strain>CNCM I-1225 / La1 / NCC 533</strain>
    </source>
</reference>
<organism>
    <name type="scientific">Lactobacillus johnsonii (strain CNCM I-12250 / La1 / NCC 533)</name>
    <dbReference type="NCBI Taxonomy" id="257314"/>
    <lineage>
        <taxon>Bacteria</taxon>
        <taxon>Bacillati</taxon>
        <taxon>Bacillota</taxon>
        <taxon>Bacilli</taxon>
        <taxon>Lactobacillales</taxon>
        <taxon>Lactobacillaceae</taxon>
        <taxon>Lactobacillus</taxon>
    </lineage>
</organism>
<dbReference type="EC" id="6.3.4.16" evidence="1"/>
<dbReference type="EC" id="6.3.5.5" evidence="1"/>
<dbReference type="EMBL" id="AE017198">
    <property type="protein sequence ID" value="AAS09097.1"/>
    <property type="molecule type" value="Genomic_DNA"/>
</dbReference>
<dbReference type="RefSeq" id="WP_011162103.1">
    <property type="nucleotide sequence ID" value="NC_005362.1"/>
</dbReference>
<dbReference type="SMR" id="Q74J34"/>
<dbReference type="KEGG" id="ljo:LJ_1276"/>
<dbReference type="PATRIC" id="fig|257314.6.peg.1144"/>
<dbReference type="eggNOG" id="COG0458">
    <property type="taxonomic scope" value="Bacteria"/>
</dbReference>
<dbReference type="HOGENOM" id="CLU_000513_1_0_9"/>
<dbReference type="UniPathway" id="UPA00068">
    <property type="reaction ID" value="UER00171"/>
</dbReference>
<dbReference type="UniPathway" id="UPA00070">
    <property type="reaction ID" value="UER00115"/>
</dbReference>
<dbReference type="Proteomes" id="UP000000581">
    <property type="component" value="Chromosome"/>
</dbReference>
<dbReference type="GO" id="GO:0005737">
    <property type="term" value="C:cytoplasm"/>
    <property type="evidence" value="ECO:0007669"/>
    <property type="project" value="TreeGrafter"/>
</dbReference>
<dbReference type="GO" id="GO:0005524">
    <property type="term" value="F:ATP binding"/>
    <property type="evidence" value="ECO:0007669"/>
    <property type="project" value="UniProtKB-UniRule"/>
</dbReference>
<dbReference type="GO" id="GO:0004087">
    <property type="term" value="F:carbamoyl-phosphate synthase (ammonia) activity"/>
    <property type="evidence" value="ECO:0007669"/>
    <property type="project" value="RHEA"/>
</dbReference>
<dbReference type="GO" id="GO:0004088">
    <property type="term" value="F:carbamoyl-phosphate synthase (glutamine-hydrolyzing) activity"/>
    <property type="evidence" value="ECO:0007669"/>
    <property type="project" value="UniProtKB-UniRule"/>
</dbReference>
<dbReference type="GO" id="GO:0046872">
    <property type="term" value="F:metal ion binding"/>
    <property type="evidence" value="ECO:0007669"/>
    <property type="project" value="UniProtKB-KW"/>
</dbReference>
<dbReference type="GO" id="GO:0044205">
    <property type="term" value="P:'de novo' UMP biosynthetic process"/>
    <property type="evidence" value="ECO:0007669"/>
    <property type="project" value="UniProtKB-UniRule"/>
</dbReference>
<dbReference type="GO" id="GO:0006541">
    <property type="term" value="P:glutamine metabolic process"/>
    <property type="evidence" value="ECO:0007669"/>
    <property type="project" value="TreeGrafter"/>
</dbReference>
<dbReference type="GO" id="GO:0006526">
    <property type="term" value="P:L-arginine biosynthetic process"/>
    <property type="evidence" value="ECO:0007669"/>
    <property type="project" value="UniProtKB-UniRule"/>
</dbReference>
<dbReference type="CDD" id="cd01424">
    <property type="entry name" value="MGS_CPS_II"/>
    <property type="match status" value="1"/>
</dbReference>
<dbReference type="FunFam" id="1.10.1030.10:FF:000002">
    <property type="entry name" value="Carbamoyl-phosphate synthase large chain"/>
    <property type="match status" value="1"/>
</dbReference>
<dbReference type="FunFam" id="3.30.1490.20:FF:000001">
    <property type="entry name" value="Carbamoyl-phosphate synthase large chain"/>
    <property type="match status" value="1"/>
</dbReference>
<dbReference type="FunFam" id="3.30.470.20:FF:000001">
    <property type="entry name" value="Carbamoyl-phosphate synthase large chain"/>
    <property type="match status" value="1"/>
</dbReference>
<dbReference type="FunFam" id="3.30.470.20:FF:000026">
    <property type="entry name" value="Carbamoyl-phosphate synthase large chain"/>
    <property type="match status" value="1"/>
</dbReference>
<dbReference type="FunFam" id="3.40.50.20:FF:000001">
    <property type="entry name" value="Carbamoyl-phosphate synthase large chain"/>
    <property type="match status" value="1"/>
</dbReference>
<dbReference type="FunFam" id="3.40.50.20:FF:000002">
    <property type="entry name" value="Carbamoyl-phosphate synthase large chain"/>
    <property type="match status" value="1"/>
</dbReference>
<dbReference type="Gene3D" id="3.40.50.20">
    <property type="match status" value="2"/>
</dbReference>
<dbReference type="Gene3D" id="3.30.1490.20">
    <property type="entry name" value="ATP-grasp fold, A domain"/>
    <property type="match status" value="1"/>
</dbReference>
<dbReference type="Gene3D" id="3.30.470.20">
    <property type="entry name" value="ATP-grasp fold, B domain"/>
    <property type="match status" value="2"/>
</dbReference>
<dbReference type="Gene3D" id="1.10.1030.10">
    <property type="entry name" value="Carbamoyl-phosphate synthetase, large subunit oligomerisation domain"/>
    <property type="match status" value="1"/>
</dbReference>
<dbReference type="Gene3D" id="3.40.50.1380">
    <property type="entry name" value="Methylglyoxal synthase-like domain"/>
    <property type="match status" value="1"/>
</dbReference>
<dbReference type="HAMAP" id="MF_01210_A">
    <property type="entry name" value="CPSase_L_chain_A"/>
    <property type="match status" value="1"/>
</dbReference>
<dbReference type="HAMAP" id="MF_01210_B">
    <property type="entry name" value="CPSase_L_chain_B"/>
    <property type="match status" value="1"/>
</dbReference>
<dbReference type="InterPro" id="IPR011761">
    <property type="entry name" value="ATP-grasp"/>
</dbReference>
<dbReference type="InterPro" id="IPR013815">
    <property type="entry name" value="ATP_grasp_subdomain_1"/>
</dbReference>
<dbReference type="InterPro" id="IPR006275">
    <property type="entry name" value="CarbamoylP_synth_lsu"/>
</dbReference>
<dbReference type="InterPro" id="IPR005480">
    <property type="entry name" value="CarbamoylP_synth_lsu_oligo"/>
</dbReference>
<dbReference type="InterPro" id="IPR036897">
    <property type="entry name" value="CarbamoylP_synth_lsu_oligo_sf"/>
</dbReference>
<dbReference type="InterPro" id="IPR005479">
    <property type="entry name" value="CbamoylP_synth_lsu-like_ATP-bd"/>
</dbReference>
<dbReference type="InterPro" id="IPR005483">
    <property type="entry name" value="CbamoylP_synth_lsu_CPSase_dom"/>
</dbReference>
<dbReference type="InterPro" id="IPR011607">
    <property type="entry name" value="MGS-like_dom"/>
</dbReference>
<dbReference type="InterPro" id="IPR036914">
    <property type="entry name" value="MGS-like_dom_sf"/>
</dbReference>
<dbReference type="InterPro" id="IPR033937">
    <property type="entry name" value="MGS_CPS_CarB"/>
</dbReference>
<dbReference type="InterPro" id="IPR016185">
    <property type="entry name" value="PreATP-grasp_dom_sf"/>
</dbReference>
<dbReference type="NCBIfam" id="TIGR01369">
    <property type="entry name" value="CPSaseII_lrg"/>
    <property type="match status" value="1"/>
</dbReference>
<dbReference type="NCBIfam" id="NF003671">
    <property type="entry name" value="PRK05294.1"/>
    <property type="match status" value="1"/>
</dbReference>
<dbReference type="NCBIfam" id="NF009455">
    <property type="entry name" value="PRK12815.1"/>
    <property type="match status" value="1"/>
</dbReference>
<dbReference type="PANTHER" id="PTHR11405:SF53">
    <property type="entry name" value="CARBAMOYL-PHOSPHATE SYNTHASE [AMMONIA], MITOCHONDRIAL"/>
    <property type="match status" value="1"/>
</dbReference>
<dbReference type="PANTHER" id="PTHR11405">
    <property type="entry name" value="CARBAMOYLTRANSFERASE FAMILY MEMBER"/>
    <property type="match status" value="1"/>
</dbReference>
<dbReference type="Pfam" id="PF02786">
    <property type="entry name" value="CPSase_L_D2"/>
    <property type="match status" value="2"/>
</dbReference>
<dbReference type="Pfam" id="PF02787">
    <property type="entry name" value="CPSase_L_D3"/>
    <property type="match status" value="1"/>
</dbReference>
<dbReference type="Pfam" id="PF02142">
    <property type="entry name" value="MGS"/>
    <property type="match status" value="1"/>
</dbReference>
<dbReference type="PRINTS" id="PR00098">
    <property type="entry name" value="CPSASE"/>
</dbReference>
<dbReference type="SMART" id="SM01096">
    <property type="entry name" value="CPSase_L_D3"/>
    <property type="match status" value="1"/>
</dbReference>
<dbReference type="SMART" id="SM01209">
    <property type="entry name" value="GARS_A"/>
    <property type="match status" value="1"/>
</dbReference>
<dbReference type="SMART" id="SM00851">
    <property type="entry name" value="MGS"/>
    <property type="match status" value="1"/>
</dbReference>
<dbReference type="SUPFAM" id="SSF48108">
    <property type="entry name" value="Carbamoyl phosphate synthetase, large subunit connection domain"/>
    <property type="match status" value="1"/>
</dbReference>
<dbReference type="SUPFAM" id="SSF56059">
    <property type="entry name" value="Glutathione synthetase ATP-binding domain-like"/>
    <property type="match status" value="2"/>
</dbReference>
<dbReference type="SUPFAM" id="SSF52335">
    <property type="entry name" value="Methylglyoxal synthase-like"/>
    <property type="match status" value="1"/>
</dbReference>
<dbReference type="SUPFAM" id="SSF52440">
    <property type="entry name" value="PreATP-grasp domain"/>
    <property type="match status" value="2"/>
</dbReference>
<dbReference type="PROSITE" id="PS50975">
    <property type="entry name" value="ATP_GRASP"/>
    <property type="match status" value="2"/>
</dbReference>
<dbReference type="PROSITE" id="PS00866">
    <property type="entry name" value="CPSASE_1"/>
    <property type="match status" value="2"/>
</dbReference>
<dbReference type="PROSITE" id="PS00867">
    <property type="entry name" value="CPSASE_2"/>
    <property type="match status" value="2"/>
</dbReference>
<dbReference type="PROSITE" id="PS51855">
    <property type="entry name" value="MGS"/>
    <property type="match status" value="1"/>
</dbReference>
<comment type="function">
    <text evidence="1">Large subunit of the glutamine-dependent carbamoyl phosphate synthetase (CPSase). CPSase catalyzes the formation of carbamoyl phosphate from the ammonia moiety of glutamine, carbonate, and phosphate donated by ATP, constituting the first step of 2 biosynthetic pathways, one leading to arginine and/or urea and the other to pyrimidine nucleotides. The large subunit (synthetase) binds the substrates ammonia (free or transferred from glutamine from the small subunit), hydrogencarbonate and ATP and carries out an ATP-coupled ligase reaction, activating hydrogencarbonate by forming carboxy phosphate which reacts with ammonia to form carbamoyl phosphate.</text>
</comment>
<comment type="catalytic activity">
    <reaction evidence="1">
        <text>hydrogencarbonate + L-glutamine + 2 ATP + H2O = carbamoyl phosphate + L-glutamate + 2 ADP + phosphate + 2 H(+)</text>
        <dbReference type="Rhea" id="RHEA:18633"/>
        <dbReference type="ChEBI" id="CHEBI:15377"/>
        <dbReference type="ChEBI" id="CHEBI:15378"/>
        <dbReference type="ChEBI" id="CHEBI:17544"/>
        <dbReference type="ChEBI" id="CHEBI:29985"/>
        <dbReference type="ChEBI" id="CHEBI:30616"/>
        <dbReference type="ChEBI" id="CHEBI:43474"/>
        <dbReference type="ChEBI" id="CHEBI:58228"/>
        <dbReference type="ChEBI" id="CHEBI:58359"/>
        <dbReference type="ChEBI" id="CHEBI:456216"/>
        <dbReference type="EC" id="6.3.5.5"/>
    </reaction>
</comment>
<comment type="catalytic activity">
    <molecule>Carbamoyl phosphate synthase large chain</molecule>
    <reaction evidence="1">
        <text>hydrogencarbonate + NH4(+) + 2 ATP = carbamoyl phosphate + 2 ADP + phosphate + 2 H(+)</text>
        <dbReference type="Rhea" id="RHEA:18029"/>
        <dbReference type="ChEBI" id="CHEBI:15378"/>
        <dbReference type="ChEBI" id="CHEBI:17544"/>
        <dbReference type="ChEBI" id="CHEBI:28938"/>
        <dbReference type="ChEBI" id="CHEBI:30616"/>
        <dbReference type="ChEBI" id="CHEBI:43474"/>
        <dbReference type="ChEBI" id="CHEBI:58228"/>
        <dbReference type="ChEBI" id="CHEBI:456216"/>
        <dbReference type="EC" id="6.3.4.16"/>
    </reaction>
</comment>
<comment type="cofactor">
    <cofactor evidence="1">
        <name>Mg(2+)</name>
        <dbReference type="ChEBI" id="CHEBI:18420"/>
    </cofactor>
    <cofactor evidence="1">
        <name>Mn(2+)</name>
        <dbReference type="ChEBI" id="CHEBI:29035"/>
    </cofactor>
    <text evidence="1">Binds 4 Mg(2+) or Mn(2+) ions per subunit.</text>
</comment>
<comment type="pathway">
    <text evidence="1">Amino-acid biosynthesis; L-arginine biosynthesis; carbamoyl phosphate from bicarbonate: step 1/1.</text>
</comment>
<comment type="pathway">
    <text evidence="1">Pyrimidine metabolism; UMP biosynthesis via de novo pathway; (S)-dihydroorotate from bicarbonate: step 1/3.</text>
</comment>
<comment type="subunit">
    <text evidence="1">Composed of two chains; the small (or glutamine) chain promotes the hydrolysis of glutamine to ammonia, which is used by the large (or ammonia) chain to synthesize carbamoyl phosphate. Tetramer of heterodimers (alpha,beta)4.</text>
</comment>
<comment type="domain">
    <text evidence="1">The large subunit is composed of 2 ATP-grasp domains that are involved in binding the 2 ATP molecules needed for carbamoyl phosphate synthesis. The N-terminal ATP-grasp domain (referred to as the carboxyphosphate synthetic component) catalyzes the ATP-dependent phosphorylation of hydrogencarbonate to carboxyphosphate and the subsequent nucleophilic attack by ammonia to form a carbamate intermediate. The C-terminal ATP-grasp domain (referred to as the carbamoyl phosphate synthetic component) then catalyzes the phosphorylation of carbamate with the second ATP to form the end product carbamoyl phosphate. The reactive and unstable enzyme intermediates are sequentially channeled from one active site to the next through the interior of the protein over a distance of at least 96 A.</text>
</comment>
<comment type="similarity">
    <text evidence="1">Belongs to the CarB family.</text>
</comment>
<proteinExistence type="inferred from homology"/>
<keyword id="KW-0028">Amino-acid biosynthesis</keyword>
<keyword id="KW-0055">Arginine biosynthesis</keyword>
<keyword id="KW-0067">ATP-binding</keyword>
<keyword id="KW-0436">Ligase</keyword>
<keyword id="KW-0460">Magnesium</keyword>
<keyword id="KW-0464">Manganese</keyword>
<keyword id="KW-0479">Metal-binding</keyword>
<keyword id="KW-0547">Nucleotide-binding</keyword>
<keyword id="KW-0665">Pyrimidine biosynthesis</keyword>
<keyword id="KW-0677">Repeat</keyword>
<name>CARB_LACJO</name>